<comment type="function">
    <text evidence="1">With S4 and S12 plays an important role in translational accuracy.</text>
</comment>
<comment type="function">
    <text evidence="1">Located at the back of the 30S subunit body where it stabilizes the conformation of the head with respect to the body.</text>
</comment>
<comment type="subunit">
    <text evidence="1">Part of the 30S ribosomal subunit. Contacts proteins S4 and S8.</text>
</comment>
<comment type="domain">
    <text>The N-terminal domain interacts with the head of the 30S subunit; the C-terminal domain interacts with the body and contacts protein S4. The interaction surface between S4 and S5 is involved in control of translational fidelity.</text>
</comment>
<comment type="similarity">
    <text evidence="1">Belongs to the universal ribosomal protein uS5 family.</text>
</comment>
<protein>
    <recommendedName>
        <fullName evidence="1">Small ribosomal subunit protein uS5</fullName>
    </recommendedName>
    <alternativeName>
        <fullName evidence="2">30S ribosomal protein S5</fullName>
    </alternativeName>
</protein>
<sequence>MEQSELGFIEKVVSLNRVAKVVKGGRRFSFSALVVVGDGKGSVGFGLGKAQEVPEALRKATEQARKAMMKIPLIEGTLPYEILGEFGAGSVMLKPASRGTGIIAGGAVRAIMEAAGVTDVLAKAIGTNNPHNVLRATMAGLSALRSAQLVSNIRGKLLEAPRK</sequence>
<organism>
    <name type="scientific">Lawsonia intracellularis (strain PHE/MN1-00)</name>
    <dbReference type="NCBI Taxonomy" id="363253"/>
    <lineage>
        <taxon>Bacteria</taxon>
        <taxon>Pseudomonadati</taxon>
        <taxon>Thermodesulfobacteriota</taxon>
        <taxon>Desulfovibrionia</taxon>
        <taxon>Desulfovibrionales</taxon>
        <taxon>Desulfovibrionaceae</taxon>
        <taxon>Lawsonia</taxon>
    </lineage>
</organism>
<feature type="chain" id="PRO_0000323147" description="Small ribosomal subunit protein uS5">
    <location>
        <begin position="1"/>
        <end position="163"/>
    </location>
</feature>
<feature type="domain" description="S5 DRBM" evidence="1">
    <location>
        <begin position="8"/>
        <end position="71"/>
    </location>
</feature>
<evidence type="ECO:0000255" key="1">
    <source>
        <dbReference type="HAMAP-Rule" id="MF_01307"/>
    </source>
</evidence>
<evidence type="ECO:0000305" key="2"/>
<proteinExistence type="inferred from homology"/>
<dbReference type="EMBL" id="AM180252">
    <property type="protein sequence ID" value="CAJ55029.1"/>
    <property type="molecule type" value="Genomic_DNA"/>
</dbReference>
<dbReference type="RefSeq" id="WP_011527058.1">
    <property type="nucleotide sequence ID" value="NC_008011.1"/>
</dbReference>
<dbReference type="SMR" id="Q1MPP8"/>
<dbReference type="STRING" id="363253.LI0975"/>
<dbReference type="KEGG" id="lip:LI0975"/>
<dbReference type="eggNOG" id="COG0098">
    <property type="taxonomic scope" value="Bacteria"/>
</dbReference>
<dbReference type="HOGENOM" id="CLU_065898_2_2_7"/>
<dbReference type="OrthoDB" id="9809045at2"/>
<dbReference type="Proteomes" id="UP000002430">
    <property type="component" value="Chromosome"/>
</dbReference>
<dbReference type="GO" id="GO:0015935">
    <property type="term" value="C:small ribosomal subunit"/>
    <property type="evidence" value="ECO:0007669"/>
    <property type="project" value="InterPro"/>
</dbReference>
<dbReference type="GO" id="GO:0019843">
    <property type="term" value="F:rRNA binding"/>
    <property type="evidence" value="ECO:0007669"/>
    <property type="project" value="UniProtKB-UniRule"/>
</dbReference>
<dbReference type="GO" id="GO:0003735">
    <property type="term" value="F:structural constituent of ribosome"/>
    <property type="evidence" value="ECO:0007669"/>
    <property type="project" value="InterPro"/>
</dbReference>
<dbReference type="GO" id="GO:0006412">
    <property type="term" value="P:translation"/>
    <property type="evidence" value="ECO:0007669"/>
    <property type="project" value="UniProtKB-UniRule"/>
</dbReference>
<dbReference type="FunFam" id="3.30.160.20:FF:000001">
    <property type="entry name" value="30S ribosomal protein S5"/>
    <property type="match status" value="1"/>
</dbReference>
<dbReference type="FunFam" id="3.30.230.10:FF:000002">
    <property type="entry name" value="30S ribosomal protein S5"/>
    <property type="match status" value="1"/>
</dbReference>
<dbReference type="Gene3D" id="3.30.160.20">
    <property type="match status" value="1"/>
</dbReference>
<dbReference type="Gene3D" id="3.30.230.10">
    <property type="match status" value="1"/>
</dbReference>
<dbReference type="HAMAP" id="MF_01307_B">
    <property type="entry name" value="Ribosomal_uS5_B"/>
    <property type="match status" value="1"/>
</dbReference>
<dbReference type="InterPro" id="IPR020568">
    <property type="entry name" value="Ribosomal_Su5_D2-typ_SF"/>
</dbReference>
<dbReference type="InterPro" id="IPR000851">
    <property type="entry name" value="Ribosomal_uS5"/>
</dbReference>
<dbReference type="InterPro" id="IPR005712">
    <property type="entry name" value="Ribosomal_uS5_bac-type"/>
</dbReference>
<dbReference type="InterPro" id="IPR005324">
    <property type="entry name" value="Ribosomal_uS5_C"/>
</dbReference>
<dbReference type="InterPro" id="IPR013810">
    <property type="entry name" value="Ribosomal_uS5_N"/>
</dbReference>
<dbReference type="InterPro" id="IPR018192">
    <property type="entry name" value="Ribosomal_uS5_N_CS"/>
</dbReference>
<dbReference type="InterPro" id="IPR014721">
    <property type="entry name" value="Ribsml_uS5_D2-typ_fold_subgr"/>
</dbReference>
<dbReference type="NCBIfam" id="TIGR01021">
    <property type="entry name" value="rpsE_bact"/>
    <property type="match status" value="1"/>
</dbReference>
<dbReference type="PANTHER" id="PTHR48277">
    <property type="entry name" value="MITOCHONDRIAL RIBOSOMAL PROTEIN S5"/>
    <property type="match status" value="1"/>
</dbReference>
<dbReference type="PANTHER" id="PTHR48277:SF1">
    <property type="entry name" value="MITOCHONDRIAL RIBOSOMAL PROTEIN S5"/>
    <property type="match status" value="1"/>
</dbReference>
<dbReference type="Pfam" id="PF00333">
    <property type="entry name" value="Ribosomal_S5"/>
    <property type="match status" value="1"/>
</dbReference>
<dbReference type="Pfam" id="PF03719">
    <property type="entry name" value="Ribosomal_S5_C"/>
    <property type="match status" value="1"/>
</dbReference>
<dbReference type="SUPFAM" id="SSF54768">
    <property type="entry name" value="dsRNA-binding domain-like"/>
    <property type="match status" value="1"/>
</dbReference>
<dbReference type="SUPFAM" id="SSF54211">
    <property type="entry name" value="Ribosomal protein S5 domain 2-like"/>
    <property type="match status" value="1"/>
</dbReference>
<dbReference type="PROSITE" id="PS00585">
    <property type="entry name" value="RIBOSOMAL_S5"/>
    <property type="match status" value="1"/>
</dbReference>
<dbReference type="PROSITE" id="PS50881">
    <property type="entry name" value="S5_DSRBD"/>
    <property type="match status" value="1"/>
</dbReference>
<accession>Q1MPP8</accession>
<keyword id="KW-1185">Reference proteome</keyword>
<keyword id="KW-0687">Ribonucleoprotein</keyword>
<keyword id="KW-0689">Ribosomal protein</keyword>
<keyword id="KW-0694">RNA-binding</keyword>
<keyword id="KW-0699">rRNA-binding</keyword>
<reference key="1">
    <citation type="submission" date="2005-11" db="EMBL/GenBank/DDBJ databases">
        <title>The complete genome sequence of Lawsonia intracellularis: the causative agent of proliferative enteropathy.</title>
        <authorList>
            <person name="Kaur K."/>
            <person name="Zhang Q."/>
            <person name="Beckler D."/>
            <person name="Munir S."/>
            <person name="Li L."/>
            <person name="Kinsley K."/>
            <person name="Herron L."/>
            <person name="Peterson A."/>
            <person name="May B."/>
            <person name="Singh S."/>
            <person name="Gebhart C."/>
            <person name="Kapur V."/>
        </authorList>
    </citation>
    <scope>NUCLEOTIDE SEQUENCE [LARGE SCALE GENOMIC DNA]</scope>
    <source>
        <strain>PHE/MN1-00</strain>
    </source>
</reference>
<gene>
    <name evidence="1" type="primary">rpsE</name>
    <name type="ordered locus">LI0975</name>
</gene>
<name>RS5_LAWIP</name>